<sequence>MLKRGLLFLTVLLLLFSFSSITNEVSASSSFDKGKYKKGDDASYFEPTGPYLMVNVTGVDGKGNELLSPHYVEFPIKPGTTLTKEKIEYYVEWALDATAYKEFRVVELDPSAKIEVTYYDKNKKKEETKSFPITEKGFVVPDLSEHIKNPGFNLITKVIIEKK</sequence>
<accession>Q6GFB2</accession>
<gene>
    <name type="primary">sak</name>
    <name type="ordered locus">SAR2039</name>
</gene>
<evidence type="ECO:0000250" key="1"/>
<evidence type="ECO:0000305" key="2"/>
<feature type="signal peptide" evidence="1">
    <location>
        <begin position="1"/>
        <end position="27"/>
    </location>
</feature>
<feature type="chain" id="PRO_0000031601" description="Staphylokinase">
    <location>
        <begin position="28"/>
        <end position="163"/>
    </location>
</feature>
<organism>
    <name type="scientific">Staphylococcus aureus (strain MRSA252)</name>
    <dbReference type="NCBI Taxonomy" id="282458"/>
    <lineage>
        <taxon>Bacteria</taxon>
        <taxon>Bacillati</taxon>
        <taxon>Bacillota</taxon>
        <taxon>Bacilli</taxon>
        <taxon>Bacillales</taxon>
        <taxon>Staphylococcaceae</taxon>
        <taxon>Staphylococcus</taxon>
    </lineage>
</organism>
<reference key="1">
    <citation type="journal article" date="2004" name="Proc. Natl. Acad. Sci. U.S.A.">
        <title>Complete genomes of two clinical Staphylococcus aureus strains: evidence for the rapid evolution of virulence and drug resistance.</title>
        <authorList>
            <person name="Holden M.T.G."/>
            <person name="Feil E.J."/>
            <person name="Lindsay J.A."/>
            <person name="Peacock S.J."/>
            <person name="Day N.P.J."/>
            <person name="Enright M.C."/>
            <person name="Foster T.J."/>
            <person name="Moore C.E."/>
            <person name="Hurst L."/>
            <person name="Atkin R."/>
            <person name="Barron A."/>
            <person name="Bason N."/>
            <person name="Bentley S.D."/>
            <person name="Chillingworth C."/>
            <person name="Chillingworth T."/>
            <person name="Churcher C."/>
            <person name="Clark L."/>
            <person name="Corton C."/>
            <person name="Cronin A."/>
            <person name="Doggett J."/>
            <person name="Dowd L."/>
            <person name="Feltwell T."/>
            <person name="Hance Z."/>
            <person name="Harris B."/>
            <person name="Hauser H."/>
            <person name="Holroyd S."/>
            <person name="Jagels K."/>
            <person name="James K.D."/>
            <person name="Lennard N."/>
            <person name="Line A."/>
            <person name="Mayes R."/>
            <person name="Moule S."/>
            <person name="Mungall K."/>
            <person name="Ormond D."/>
            <person name="Quail M.A."/>
            <person name="Rabbinowitsch E."/>
            <person name="Rutherford K.M."/>
            <person name="Sanders M."/>
            <person name="Sharp S."/>
            <person name="Simmonds M."/>
            <person name="Stevens K."/>
            <person name="Whitehead S."/>
            <person name="Barrell B.G."/>
            <person name="Spratt B.G."/>
            <person name="Parkhill J."/>
        </authorList>
    </citation>
    <scope>NUCLEOTIDE SEQUENCE [LARGE SCALE GENOMIC DNA]</scope>
    <source>
        <strain>MRSA252</strain>
    </source>
</reference>
<keyword id="KW-0617">Plasminogen activation</keyword>
<keyword id="KW-0964">Secreted</keyword>
<keyword id="KW-0732">Signal</keyword>
<comment type="function">
    <text evidence="1">Potent plasminogen activator that converts plasminogen into plasmin. It forms a 1:1 complex with plasmin, which in turn activates other plasminogen molecules (By similarity).</text>
</comment>
<comment type="subcellular location">
    <subcellularLocation>
        <location evidence="1">Secreted</location>
    </subcellularLocation>
</comment>
<comment type="similarity">
    <text evidence="2">Belongs to the staphylokinase family.</text>
</comment>
<dbReference type="EMBL" id="BX571856">
    <property type="protein sequence ID" value="CAG41024.1"/>
    <property type="molecule type" value="Genomic_DNA"/>
</dbReference>
<dbReference type="RefSeq" id="WP_000919350.1">
    <property type="nucleotide sequence ID" value="NC_002952.2"/>
</dbReference>
<dbReference type="BMRB" id="Q6GFB2"/>
<dbReference type="SMR" id="Q6GFB2"/>
<dbReference type="KEGG" id="sar:SAR2039"/>
<dbReference type="HOGENOM" id="CLU_137975_0_0_9"/>
<dbReference type="PRO" id="PR:Q6GFB2"/>
<dbReference type="Proteomes" id="UP000000596">
    <property type="component" value="Chromosome"/>
</dbReference>
<dbReference type="GO" id="GO:0005576">
    <property type="term" value="C:extracellular region"/>
    <property type="evidence" value="ECO:0007669"/>
    <property type="project" value="UniProtKB-SubCell"/>
</dbReference>
<dbReference type="Gene3D" id="3.10.20.130">
    <property type="match status" value="1"/>
</dbReference>
<dbReference type="InterPro" id="IPR004093">
    <property type="entry name" value="SAK"/>
</dbReference>
<dbReference type="InterPro" id="IPR036120">
    <property type="entry name" value="SAK/SK_sf"/>
</dbReference>
<dbReference type="Pfam" id="PF02821">
    <property type="entry name" value="Staphylokinase"/>
    <property type="match status" value="1"/>
</dbReference>
<dbReference type="SUPFAM" id="SSF54328">
    <property type="entry name" value="Staphylokinase/streptokinase"/>
    <property type="match status" value="1"/>
</dbReference>
<name>SAK_STAAR</name>
<proteinExistence type="inferred from homology"/>
<protein>
    <recommendedName>
        <fullName>Staphylokinase</fullName>
    </recommendedName>
</protein>